<reference key="1">
    <citation type="journal article" date="2010" name="Genome Biol. Evol.">
        <title>Continuing evolution of Burkholderia mallei through genome reduction and large-scale rearrangements.</title>
        <authorList>
            <person name="Losada L."/>
            <person name="Ronning C.M."/>
            <person name="DeShazer D."/>
            <person name="Woods D."/>
            <person name="Fedorova N."/>
            <person name="Kim H.S."/>
            <person name="Shabalina S.A."/>
            <person name="Pearson T.R."/>
            <person name="Brinkac L."/>
            <person name="Tan P."/>
            <person name="Nandi T."/>
            <person name="Crabtree J."/>
            <person name="Badger J."/>
            <person name="Beckstrom-Sternberg S."/>
            <person name="Saqib M."/>
            <person name="Schutzer S.E."/>
            <person name="Keim P."/>
            <person name="Nierman W.C."/>
        </authorList>
    </citation>
    <scope>NUCLEOTIDE SEQUENCE [LARGE SCALE GENOMIC DNA]</scope>
    <source>
        <strain>1106a</strain>
    </source>
</reference>
<name>TIG_BURP0</name>
<protein>
    <recommendedName>
        <fullName evidence="1">Trigger factor</fullName>
        <shortName evidence="1">TF</shortName>
        <ecNumber evidence="1">5.2.1.8</ecNumber>
    </recommendedName>
    <alternativeName>
        <fullName evidence="1">PPIase</fullName>
    </alternativeName>
</protein>
<organism>
    <name type="scientific">Burkholderia pseudomallei (strain 1106a)</name>
    <dbReference type="NCBI Taxonomy" id="357348"/>
    <lineage>
        <taxon>Bacteria</taxon>
        <taxon>Pseudomonadati</taxon>
        <taxon>Pseudomonadota</taxon>
        <taxon>Betaproteobacteria</taxon>
        <taxon>Burkholderiales</taxon>
        <taxon>Burkholderiaceae</taxon>
        <taxon>Burkholderia</taxon>
        <taxon>pseudomallei group</taxon>
    </lineage>
</organism>
<comment type="function">
    <text evidence="1">Involved in protein export. Acts as a chaperone by maintaining the newly synthesized protein in an open conformation. Functions as a peptidyl-prolyl cis-trans isomerase.</text>
</comment>
<comment type="catalytic activity">
    <reaction evidence="1">
        <text>[protein]-peptidylproline (omega=180) = [protein]-peptidylproline (omega=0)</text>
        <dbReference type="Rhea" id="RHEA:16237"/>
        <dbReference type="Rhea" id="RHEA-COMP:10747"/>
        <dbReference type="Rhea" id="RHEA-COMP:10748"/>
        <dbReference type="ChEBI" id="CHEBI:83833"/>
        <dbReference type="ChEBI" id="CHEBI:83834"/>
        <dbReference type="EC" id="5.2.1.8"/>
    </reaction>
</comment>
<comment type="subcellular location">
    <subcellularLocation>
        <location>Cytoplasm</location>
    </subcellularLocation>
    <text evidence="1">About half TF is bound to the ribosome near the polypeptide exit tunnel while the other half is free in the cytoplasm.</text>
</comment>
<comment type="domain">
    <text evidence="1">Consists of 3 domains; the N-terminus binds the ribosome, the middle domain has PPIase activity, while the C-terminus has intrinsic chaperone activity on its own.</text>
</comment>
<comment type="similarity">
    <text evidence="1">Belongs to the FKBP-type PPIase family. Tig subfamily.</text>
</comment>
<feature type="chain" id="PRO_1000022656" description="Trigger factor">
    <location>
        <begin position="1"/>
        <end position="449"/>
    </location>
</feature>
<feature type="domain" description="PPIase FKBP-type" evidence="1">
    <location>
        <begin position="173"/>
        <end position="258"/>
    </location>
</feature>
<evidence type="ECO:0000255" key="1">
    <source>
        <dbReference type="HAMAP-Rule" id="MF_00303"/>
    </source>
</evidence>
<keyword id="KW-0131">Cell cycle</keyword>
<keyword id="KW-0132">Cell division</keyword>
<keyword id="KW-0143">Chaperone</keyword>
<keyword id="KW-0963">Cytoplasm</keyword>
<keyword id="KW-0413">Isomerase</keyword>
<keyword id="KW-0697">Rotamase</keyword>
<accession>A3NWA7</accession>
<dbReference type="EC" id="5.2.1.8" evidence="1"/>
<dbReference type="EMBL" id="CP000572">
    <property type="protein sequence ID" value="ABN91760.1"/>
    <property type="molecule type" value="Genomic_DNA"/>
</dbReference>
<dbReference type="RefSeq" id="WP_004193941.1">
    <property type="nucleotide sequence ID" value="NC_009076.1"/>
</dbReference>
<dbReference type="SMR" id="A3NWA7"/>
<dbReference type="GeneID" id="92979197"/>
<dbReference type="KEGG" id="bpl:BURPS1106A_2366"/>
<dbReference type="HOGENOM" id="CLU_033058_2_0_4"/>
<dbReference type="Proteomes" id="UP000006738">
    <property type="component" value="Chromosome I"/>
</dbReference>
<dbReference type="GO" id="GO:0005737">
    <property type="term" value="C:cytoplasm"/>
    <property type="evidence" value="ECO:0007669"/>
    <property type="project" value="UniProtKB-SubCell"/>
</dbReference>
<dbReference type="GO" id="GO:0003755">
    <property type="term" value="F:peptidyl-prolyl cis-trans isomerase activity"/>
    <property type="evidence" value="ECO:0007669"/>
    <property type="project" value="UniProtKB-UniRule"/>
</dbReference>
<dbReference type="GO" id="GO:0044183">
    <property type="term" value="F:protein folding chaperone"/>
    <property type="evidence" value="ECO:0007669"/>
    <property type="project" value="TreeGrafter"/>
</dbReference>
<dbReference type="GO" id="GO:0043022">
    <property type="term" value="F:ribosome binding"/>
    <property type="evidence" value="ECO:0007669"/>
    <property type="project" value="TreeGrafter"/>
</dbReference>
<dbReference type="GO" id="GO:0051083">
    <property type="term" value="P:'de novo' cotranslational protein folding"/>
    <property type="evidence" value="ECO:0007669"/>
    <property type="project" value="TreeGrafter"/>
</dbReference>
<dbReference type="GO" id="GO:0051301">
    <property type="term" value="P:cell division"/>
    <property type="evidence" value="ECO:0007669"/>
    <property type="project" value="UniProtKB-KW"/>
</dbReference>
<dbReference type="GO" id="GO:0061077">
    <property type="term" value="P:chaperone-mediated protein folding"/>
    <property type="evidence" value="ECO:0007669"/>
    <property type="project" value="TreeGrafter"/>
</dbReference>
<dbReference type="GO" id="GO:0015031">
    <property type="term" value="P:protein transport"/>
    <property type="evidence" value="ECO:0007669"/>
    <property type="project" value="UniProtKB-UniRule"/>
</dbReference>
<dbReference type="GO" id="GO:0043335">
    <property type="term" value="P:protein unfolding"/>
    <property type="evidence" value="ECO:0007669"/>
    <property type="project" value="TreeGrafter"/>
</dbReference>
<dbReference type="FunFam" id="3.10.50.40:FF:000001">
    <property type="entry name" value="Trigger factor"/>
    <property type="match status" value="1"/>
</dbReference>
<dbReference type="Gene3D" id="3.10.50.40">
    <property type="match status" value="1"/>
</dbReference>
<dbReference type="Gene3D" id="3.30.70.1050">
    <property type="entry name" value="Trigger factor ribosome-binding domain"/>
    <property type="match status" value="1"/>
</dbReference>
<dbReference type="Gene3D" id="1.10.3120.10">
    <property type="entry name" value="Trigger factor, C-terminal domain"/>
    <property type="match status" value="1"/>
</dbReference>
<dbReference type="HAMAP" id="MF_00303">
    <property type="entry name" value="Trigger_factor_Tig"/>
    <property type="match status" value="1"/>
</dbReference>
<dbReference type="InterPro" id="IPR046357">
    <property type="entry name" value="PPIase_dom_sf"/>
</dbReference>
<dbReference type="InterPro" id="IPR001179">
    <property type="entry name" value="PPIase_FKBP_dom"/>
</dbReference>
<dbReference type="InterPro" id="IPR005215">
    <property type="entry name" value="Trig_fac"/>
</dbReference>
<dbReference type="InterPro" id="IPR008880">
    <property type="entry name" value="Trigger_fac_C"/>
</dbReference>
<dbReference type="InterPro" id="IPR037041">
    <property type="entry name" value="Trigger_fac_C_sf"/>
</dbReference>
<dbReference type="InterPro" id="IPR008881">
    <property type="entry name" value="Trigger_fac_ribosome-bd_bac"/>
</dbReference>
<dbReference type="InterPro" id="IPR036611">
    <property type="entry name" value="Trigger_fac_ribosome-bd_sf"/>
</dbReference>
<dbReference type="InterPro" id="IPR027304">
    <property type="entry name" value="Trigger_fact/SurA_dom_sf"/>
</dbReference>
<dbReference type="NCBIfam" id="TIGR00115">
    <property type="entry name" value="tig"/>
    <property type="match status" value="1"/>
</dbReference>
<dbReference type="PANTHER" id="PTHR30560">
    <property type="entry name" value="TRIGGER FACTOR CHAPERONE AND PEPTIDYL-PROLYL CIS/TRANS ISOMERASE"/>
    <property type="match status" value="1"/>
</dbReference>
<dbReference type="PANTHER" id="PTHR30560:SF3">
    <property type="entry name" value="TRIGGER FACTOR-LIKE PROTEIN TIG, CHLOROPLASTIC"/>
    <property type="match status" value="1"/>
</dbReference>
<dbReference type="Pfam" id="PF00254">
    <property type="entry name" value="FKBP_C"/>
    <property type="match status" value="1"/>
</dbReference>
<dbReference type="Pfam" id="PF05698">
    <property type="entry name" value="Trigger_C"/>
    <property type="match status" value="1"/>
</dbReference>
<dbReference type="Pfam" id="PF05697">
    <property type="entry name" value="Trigger_N"/>
    <property type="match status" value="1"/>
</dbReference>
<dbReference type="PIRSF" id="PIRSF003095">
    <property type="entry name" value="Trigger_factor"/>
    <property type="match status" value="1"/>
</dbReference>
<dbReference type="SUPFAM" id="SSF54534">
    <property type="entry name" value="FKBP-like"/>
    <property type="match status" value="1"/>
</dbReference>
<dbReference type="SUPFAM" id="SSF109998">
    <property type="entry name" value="Triger factor/SurA peptide-binding domain-like"/>
    <property type="match status" value="1"/>
</dbReference>
<dbReference type="SUPFAM" id="SSF102735">
    <property type="entry name" value="Trigger factor ribosome-binding domain"/>
    <property type="match status" value="1"/>
</dbReference>
<dbReference type="PROSITE" id="PS50059">
    <property type="entry name" value="FKBP_PPIASE"/>
    <property type="match status" value="1"/>
</dbReference>
<sequence>MANVVENLGKLERRVTISLPKDVVQKEIDARIQKLAKNVRMPGFRPGKVPLKMVAQQYAGQVEAEVLSDKIGQEFFTISRAENLRVAGQPSFAPKEDTQQESAYAFDATFEVYPEVKIGDLATAEVERSTTTIGDAEIDRTLDILRKQRVHFHARGEGGEHGDGGADTAAQNGDRVTVDFVGKIDGVAFQGGTAEDFVFVLGEGRMLPEFETAALGLKAGESREFDLKFPDDYHGKDVAGKTAQFTVTLKKVEWPHLPEIDADFAKSLGVEDGDLTKMRAEIKENLEREAKRRTQSIVKNQVMDALLKISELDVPKALIEQDQQRLVEMARQDLAQRGVPNAKDAPIPAEMFADQAERRVKLGLVLAELVKANGLEAKPEQIRAEVDEFAKSYEDPKEVVRWYYSNQQRLAEMEAFVVESNVVDFVLGKAKVTDKEVSFEALASATAQA</sequence>
<proteinExistence type="inferred from homology"/>
<gene>
    <name evidence="1" type="primary">tig</name>
    <name type="ordered locus">BURPS1106A_2366</name>
</gene>